<gene>
    <name type="primary">rbpj</name>
    <name type="synonym">rbpsuh</name>
    <name type="synonym">suh</name>
</gene>
<accession>Q91880</accession>
<accession>Q91881</accession>
<name>SUH_XENLA</name>
<organism>
    <name type="scientific">Xenopus laevis</name>
    <name type="common">African clawed frog</name>
    <dbReference type="NCBI Taxonomy" id="8355"/>
    <lineage>
        <taxon>Eukaryota</taxon>
        <taxon>Metazoa</taxon>
        <taxon>Chordata</taxon>
        <taxon>Craniata</taxon>
        <taxon>Vertebrata</taxon>
        <taxon>Euteleostomi</taxon>
        <taxon>Amphibia</taxon>
        <taxon>Batrachia</taxon>
        <taxon>Anura</taxon>
        <taxon>Pipoidea</taxon>
        <taxon>Pipidae</taxon>
        <taxon>Xenopodinae</taxon>
        <taxon>Xenopus</taxon>
        <taxon>Xenopus</taxon>
    </lineage>
</organism>
<evidence type="ECO:0000250" key="1"/>
<evidence type="ECO:0000250" key="2">
    <source>
        <dbReference type="UniProtKB" id="Q06330"/>
    </source>
</evidence>
<evidence type="ECO:0000269" key="3">
    <source>
    </source>
</evidence>
<evidence type="ECO:0000269" key="4">
    <source>
    </source>
</evidence>
<evidence type="ECO:0000269" key="5">
    <source>
    </source>
</evidence>
<evidence type="ECO:0000303" key="6">
    <source>
    </source>
</evidence>
<evidence type="ECO:0000305" key="7"/>
<evidence type="ECO:0000305" key="8">
    <source>
    </source>
</evidence>
<protein>
    <recommendedName>
        <fullName>Suppressor of hairless protein homolog</fullName>
    </recommendedName>
    <alternativeName>
        <fullName>X-Su(H)</fullName>
    </alternativeName>
</protein>
<feature type="chain" id="PRO_0000208569" description="Suppressor of hairless protein homolog">
    <location>
        <begin position="1"/>
        <end position="501"/>
    </location>
</feature>
<feature type="domain" description="IPT/TIG">
    <location>
        <begin position="356"/>
        <end position="446"/>
    </location>
</feature>
<feature type="region of interest" description="DNA-binding" evidence="2">
    <location>
        <begin position="58"/>
        <end position="68"/>
    </location>
</feature>
<feature type="region of interest" description="DNA-binding" evidence="2">
    <location>
        <begin position="166"/>
        <end position="171"/>
    </location>
</feature>
<feature type="region of interest" description="DNA-binding" evidence="2">
    <location>
        <begin position="193"/>
        <end position="198"/>
    </location>
</feature>
<feature type="splice variant" id="VSP_008394" description="In isoform 2." evidence="6">
    <location>
        <begin position="1"/>
        <end position="20"/>
    </location>
</feature>
<feature type="splice variant" id="VSP_008395" description="In isoform 2." evidence="6">
    <original>G</original>
    <variation>M</variation>
    <location>
        <position position="21"/>
    </location>
</feature>
<dbReference type="EMBL" id="U60093">
    <property type="protein sequence ID" value="AAB05478.1"/>
    <property type="molecule type" value="mRNA"/>
</dbReference>
<dbReference type="EMBL" id="U60094">
    <property type="protein sequence ID" value="AAB05479.1"/>
    <property type="molecule type" value="Genomic_DNA"/>
</dbReference>
<dbReference type="RefSeq" id="NP_001084347.1">
    <molecule id="Q91880-1"/>
    <property type="nucleotide sequence ID" value="NM_001090878.1"/>
</dbReference>
<dbReference type="SMR" id="Q91880"/>
<dbReference type="ELM" id="Q91880"/>
<dbReference type="IntAct" id="Q91880">
    <property type="interactions" value="2"/>
</dbReference>
<dbReference type="MINT" id="Q91880"/>
<dbReference type="GeneID" id="399453"/>
<dbReference type="KEGG" id="xla:399453"/>
<dbReference type="AGR" id="Xenbase:XB-GENE-865998"/>
<dbReference type="CTD" id="399453"/>
<dbReference type="Xenbase" id="XB-GENE-865998">
    <property type="gene designation" value="rbpj.S"/>
</dbReference>
<dbReference type="OrthoDB" id="5600360at2759"/>
<dbReference type="Proteomes" id="UP000186698">
    <property type="component" value="Chromosome 1S"/>
</dbReference>
<dbReference type="Bgee" id="399453">
    <property type="expression patterns" value="Expressed in oocyte and 19 other cell types or tissues"/>
</dbReference>
<dbReference type="GO" id="GO:0005737">
    <property type="term" value="C:cytoplasm"/>
    <property type="evidence" value="ECO:0000250"/>
    <property type="project" value="UniProtKB"/>
</dbReference>
<dbReference type="GO" id="GO:0002193">
    <property type="term" value="C:MAML1-RBP-Jkappa- ICN1 complex"/>
    <property type="evidence" value="ECO:0000318"/>
    <property type="project" value="GO_Central"/>
</dbReference>
<dbReference type="GO" id="GO:0005634">
    <property type="term" value="C:nucleus"/>
    <property type="evidence" value="ECO:0000250"/>
    <property type="project" value="UniProtKB"/>
</dbReference>
<dbReference type="GO" id="GO:0001228">
    <property type="term" value="F:DNA-binding transcription activator activity, RNA polymerase II-specific"/>
    <property type="evidence" value="ECO:0007669"/>
    <property type="project" value="InterPro"/>
</dbReference>
<dbReference type="GO" id="GO:0000981">
    <property type="term" value="F:DNA-binding transcription factor activity, RNA polymerase II-specific"/>
    <property type="evidence" value="ECO:0000318"/>
    <property type="project" value="GO_Central"/>
</dbReference>
<dbReference type="GO" id="GO:0000978">
    <property type="term" value="F:RNA polymerase II cis-regulatory region sequence-specific DNA binding"/>
    <property type="evidence" value="ECO:0000318"/>
    <property type="project" value="GO_Central"/>
</dbReference>
<dbReference type="GO" id="GO:0043565">
    <property type="term" value="F:sequence-specific DNA binding"/>
    <property type="evidence" value="ECO:0000250"/>
    <property type="project" value="UniProtKB"/>
</dbReference>
<dbReference type="GO" id="GO:0007219">
    <property type="term" value="P:Notch signaling pathway"/>
    <property type="evidence" value="ECO:0000318"/>
    <property type="project" value="GO_Central"/>
</dbReference>
<dbReference type="GO" id="GO:0045944">
    <property type="term" value="P:positive regulation of transcription by RNA polymerase II"/>
    <property type="evidence" value="ECO:0000250"/>
    <property type="project" value="UniProtKB"/>
</dbReference>
<dbReference type="GO" id="GO:0007221">
    <property type="term" value="P:positive regulation of transcription of Notch receptor target"/>
    <property type="evidence" value="ECO:0000250"/>
    <property type="project" value="UniProtKB"/>
</dbReference>
<dbReference type="CDD" id="cd01176">
    <property type="entry name" value="IPT_RBP-Jkappa"/>
    <property type="match status" value="1"/>
</dbReference>
<dbReference type="FunFam" id="2.60.40.1450:FF:000001">
    <property type="entry name" value="Recombining binding protein suppressor of hairless"/>
    <property type="match status" value="1"/>
</dbReference>
<dbReference type="FunFam" id="2.80.10.50:FF:000003">
    <property type="entry name" value="recombining binding protein suppressor of hairless"/>
    <property type="match status" value="1"/>
</dbReference>
<dbReference type="FunFam" id="2.60.40.10:FF:000074">
    <property type="entry name" value="Recombining binding protein suppressor of hairless, putative"/>
    <property type="match status" value="1"/>
</dbReference>
<dbReference type="Gene3D" id="2.80.10.50">
    <property type="match status" value="1"/>
</dbReference>
<dbReference type="Gene3D" id="2.60.40.10">
    <property type="entry name" value="Immunoglobulins"/>
    <property type="match status" value="1"/>
</dbReference>
<dbReference type="Gene3D" id="2.60.40.1450">
    <property type="entry name" value="LAG1, DNA binding domain"/>
    <property type="match status" value="1"/>
</dbReference>
<dbReference type="InterPro" id="IPR015350">
    <property type="entry name" value="Beta-trefoil_DNA-bd_dom"/>
</dbReference>
<dbReference type="InterPro" id="IPR036358">
    <property type="entry name" value="BTD_sf"/>
</dbReference>
<dbReference type="InterPro" id="IPR040159">
    <property type="entry name" value="CLS_fam"/>
</dbReference>
<dbReference type="InterPro" id="IPR013783">
    <property type="entry name" value="Ig-like_fold"/>
</dbReference>
<dbReference type="InterPro" id="IPR014756">
    <property type="entry name" value="Ig_E-set"/>
</dbReference>
<dbReference type="InterPro" id="IPR008967">
    <property type="entry name" value="p53-like_TF_DNA-bd_sf"/>
</dbReference>
<dbReference type="InterPro" id="IPR015351">
    <property type="entry name" value="RBP-J/Cbf11/Cbf12_DNA-bd"/>
</dbReference>
<dbReference type="InterPro" id="IPR037095">
    <property type="entry name" value="RBP-J/Cbf11_DNA-bd_sf"/>
</dbReference>
<dbReference type="InterPro" id="IPR038007">
    <property type="entry name" value="RBP-Jkappa_IPT"/>
</dbReference>
<dbReference type="PANTHER" id="PTHR10665">
    <property type="entry name" value="RECOMBINING BINDING PROTEIN SUPPRESSOR OF HAIRLESS"/>
    <property type="match status" value="1"/>
</dbReference>
<dbReference type="Pfam" id="PF09270">
    <property type="entry name" value="BTD"/>
    <property type="match status" value="1"/>
</dbReference>
<dbReference type="Pfam" id="PF09271">
    <property type="entry name" value="LAG1-DNAbind"/>
    <property type="match status" value="1"/>
</dbReference>
<dbReference type="Pfam" id="PF20144">
    <property type="entry name" value="TIG_SUH"/>
    <property type="match status" value="1"/>
</dbReference>
<dbReference type="SMART" id="SM01268">
    <property type="entry name" value="BTD"/>
    <property type="match status" value="1"/>
</dbReference>
<dbReference type="SMART" id="SM01267">
    <property type="entry name" value="LAG1_DNAbind"/>
    <property type="match status" value="1"/>
</dbReference>
<dbReference type="SUPFAM" id="SSF110217">
    <property type="entry name" value="DNA-binding protein LAG-1 (CSL)"/>
    <property type="match status" value="1"/>
</dbReference>
<dbReference type="SUPFAM" id="SSF81296">
    <property type="entry name" value="E set domains"/>
    <property type="match status" value="1"/>
</dbReference>
<dbReference type="SUPFAM" id="SSF49417">
    <property type="entry name" value="p53-like transcription factors"/>
    <property type="match status" value="1"/>
</dbReference>
<comment type="function">
    <text evidence="1 2 5">Transcriptional regulator that plays a central role in Notch signaling, a signaling pathway involved in cell-cell communication that regulates a broad spectrum of cell-fate determinations. Acts as a transcriptional repressor when it is not associated with Notch proteins. When associated with some NICD product of Notch proteins (Notch intracellular domain), it acts as a transcriptional activator that activates transcription of Notch target genes (By similarity). Required for the transcriptional activation of ESR1, suggesting that it is required during primary neurogenesis in embryos. Binds to the oxygen responsive element of COX4I2 and activates its transcription under hypoxia conditions (4% oxygen) (By similarity).</text>
</comment>
<comment type="subunit">
    <text evidence="1 3 4">Interacts with activated Notch proteins (By similarity). Forms a ternary complex with nrarp and the intracellular domain (NICD) of notch1. Interacts with rita1, leading to nuclear export, prevent the interaction between rbpj and NICD product and subsequent down-regulation of the Notch signaling pathway.</text>
</comment>
<comment type="subcellular location">
    <subcellularLocation>
        <location evidence="8">Nucleus</location>
    </subcellularLocation>
    <subcellularLocation>
        <location evidence="1">Cytoplasm</location>
    </subcellularLocation>
    <text evidence="1">Mainly nuclear, upon interaction with rita1, translocates to the cytoplasm, down-regulating the Notch signaling pathway.</text>
</comment>
<comment type="alternative products">
    <event type="alternative splicing"/>
    <isoform>
        <id>Q91880-1</id>
        <name>1</name>
        <name>X-Su(H)1</name>
        <sequence type="displayed"/>
    </isoform>
    <isoform>
        <id>Q91880-2</id>
        <name>2</name>
        <name>X-Su(H)2</name>
        <sequence type="described" ref="VSP_008394 VSP_008395"/>
    </isoform>
</comment>
<comment type="similarity">
    <text evidence="7">Belongs to the Su(H) family.</text>
</comment>
<keyword id="KW-0010">Activator</keyword>
<keyword id="KW-0025">Alternative splicing</keyword>
<keyword id="KW-0963">Cytoplasm</keyword>
<keyword id="KW-0217">Developmental protein</keyword>
<keyword id="KW-0238">DNA-binding</keyword>
<keyword id="KW-0914">Notch signaling pathway</keyword>
<keyword id="KW-0539">Nucleus</keyword>
<keyword id="KW-1185">Reference proteome</keyword>
<keyword id="KW-0677">Repeat</keyword>
<keyword id="KW-0678">Repressor</keyword>
<keyword id="KW-0804">Transcription</keyword>
<keyword id="KW-0805">Transcription regulation</keyword>
<proteinExistence type="evidence at protein level"/>
<sequence length="501" mass="55864">MQPGIPKYTPSAIQLAPVVTGKFGERPQPKRLTREAMRNYLKERGDQTVLILHAKVAQKSYGNEKRFFCPPPCVYLMGSGWKKKKEQMERDGCSEQESQPCAFIGIGNSEQEMQQLNLEGKNYCTAKTLYISDSDKRKHFMLSVKMFYGNSDDIGVFLSKRIKVISKPSKKKQSLKNADLCIASGTKVALFNRLRSQTVSTRYLHVEGGNFHASSQQWGAFYIHLLDDEESEGEEFTVRDGYIHYGQTVKLVCSVTGMALPRLIIRKVDKQTALLDADDPVSQLHKCAFYLKDTERMYLCLSQERIIQFQATPCPKEPNKEMINDGASWTIISTDKAEYTFYEGMGPINAPVTPVPVVESLQLNGGGDVAMLELTGQNFTPNLRVWFGDVEAETMYRCAESMLCVVPDISAFREGWRWVRQPVQVPVTLVRNDGVIYSTSLTFTYTPEPGPRPHCSAAGAILRANSSLLASNEPNTNSEGSYTNISTNSANVTSSTAAVVS</sequence>
<reference key="1">
    <citation type="journal article" date="1997" name="Development">
        <title>The Xenopus homolog of Drosophila suppressor of hairless mediates Notch signaling during primary neurogenesis.</title>
        <authorList>
            <person name="Wettstein D.A."/>
            <person name="Turner D.L."/>
            <person name="Kintner C."/>
        </authorList>
    </citation>
    <scope>NUCLEOTIDE SEQUENCE [GENOMIC DNA / MRNA] (ISOFORMS 1 AND 2)</scope>
    <scope>FUNCTION</scope>
    <source>
        <tissue>Embryo</tissue>
    </source>
</reference>
<reference key="2">
    <citation type="journal article" date="2001" name="Genes Dev.">
        <title>Nrarp is a novel intracellular component of the Notch signaling pathway.</title>
        <authorList>
            <person name="Lamar E."/>
            <person name="Deblandre G."/>
            <person name="Wettstein D."/>
            <person name="Gawantka V."/>
            <person name="Pollet N."/>
            <person name="Niehrs C."/>
            <person name="Kintner C."/>
        </authorList>
    </citation>
    <scope>SUBUNIT</scope>
</reference>
<reference key="3">
    <citation type="journal article" date="2011" name="EMBO J.">
        <title>RITA, a novel modulator of Notch signalling, acts via nuclear export of RBP-J.</title>
        <authorList>
            <person name="Wacker S.A."/>
            <person name="Alvarado C."/>
            <person name="von Wichert G."/>
            <person name="Knippschild U."/>
            <person name="Wiedenmann J."/>
            <person name="Clauss K."/>
            <person name="Nienhaus G.U."/>
            <person name="Hameister H."/>
            <person name="Baumann B."/>
            <person name="Borggrefe T."/>
            <person name="Knochel W."/>
            <person name="Oswald F."/>
        </authorList>
    </citation>
    <scope>INTERACTION WITH RITA1</scope>
    <scope>SUBCELLULAR LOCATION</scope>
</reference>